<dbReference type="EMBL" id="U18466">
    <property type="protein sequence ID" value="AAA65241.1"/>
    <property type="molecule type" value="Genomic_DNA"/>
</dbReference>
<dbReference type="RefSeq" id="NP_042705.1">
    <property type="nucleotide sequence ID" value="NC_001659.2"/>
</dbReference>
<dbReference type="GeneID" id="22220395"/>
<dbReference type="KEGG" id="vg:22220395"/>
<dbReference type="Proteomes" id="UP000000624">
    <property type="component" value="Segment"/>
</dbReference>
<dbReference type="GO" id="GO:0030430">
    <property type="term" value="C:host cell cytoplasm"/>
    <property type="evidence" value="ECO:0007669"/>
    <property type="project" value="UniProtKB-SubCell"/>
</dbReference>
<organismHost>
    <name type="scientific">Ornithodoros</name>
    <name type="common">relapsing fever ticks</name>
    <dbReference type="NCBI Taxonomy" id="6937"/>
</organismHost>
<organismHost>
    <name type="scientific">Sus scrofa</name>
    <name type="common">Pig</name>
    <dbReference type="NCBI Taxonomy" id="9823"/>
</organismHost>
<accession>Q65132</accession>
<keyword id="KW-0244">Early protein</keyword>
<keyword id="KW-1035">Host cytoplasm</keyword>
<keyword id="KW-0945">Host-virus interaction</keyword>
<keyword id="KW-1185">Reference proteome</keyword>
<organism>
    <name type="scientific">African swine fever virus (strain Badajoz 1971 Vero-adapted)</name>
    <name type="common">Ba71V</name>
    <name type="synonym">ASFV</name>
    <dbReference type="NCBI Taxonomy" id="10498"/>
    <lineage>
        <taxon>Viruses</taxon>
        <taxon>Varidnaviria</taxon>
        <taxon>Bamfordvirae</taxon>
        <taxon>Nucleocytoviricota</taxon>
        <taxon>Pokkesviricetes</taxon>
        <taxon>Asfuvirales</taxon>
        <taxon>Asfarviridae</taxon>
        <taxon>Asfivirus</taxon>
        <taxon>African swine fever virus</taxon>
    </lineage>
</organism>
<evidence type="ECO:0000269" key="1">
    <source>
    </source>
</evidence>
<evidence type="ECO:0000269" key="2">
    <source>
    </source>
</evidence>
<evidence type="ECO:0000305" key="3"/>
<comment type="function">
    <text evidence="1">May subvert the host innate immune response by interacting with host IL1B and interfering with its function.</text>
</comment>
<comment type="subunit">
    <text evidence="1">Interacts with host IL1B.</text>
</comment>
<comment type="subcellular location">
    <subcellularLocation>
        <location evidence="1">Host cytoplasm</location>
    </subcellularLocation>
</comment>
<comment type="induction">
    <text evidence="1 2">Expressed in the early phase of the viral replicative cycle.</text>
</comment>
<comment type="similarity">
    <text evidence="3">Belongs to the asfivirus L83L family.</text>
</comment>
<name>L83L_ASFB7</name>
<protein>
    <recommendedName>
        <fullName>Protein L83L</fullName>
    </recommendedName>
</protein>
<sequence>MIMDTSLKNNDGALEADNKNYQDYKAEPDKTSDVLDVTKYNSVVDCCHKNYSTFTSEWYINERKYNDVPEGPKKAVVHRCTIL</sequence>
<feature type="chain" id="PRO_0000373734" description="Protein L83L">
    <location>
        <begin position="1"/>
        <end position="83"/>
    </location>
</feature>
<gene>
    <name type="ordered locus">BA71V-006</name>
    <name type="ORF">L83L</name>
</gene>
<proteinExistence type="evidence at protein level"/>
<reference key="1">
    <citation type="journal article" date="1995" name="Virology">
        <title>Analysis of the complete nucleotide sequence of African swine fever virus.</title>
        <authorList>
            <person name="Yanez R.J."/>
            <person name="Rodriguez J.M."/>
            <person name="Nogal M.L."/>
            <person name="Yuste L."/>
            <person name="Enriquez C."/>
            <person name="Rodriguez J.F."/>
            <person name="Vinuela E."/>
        </authorList>
    </citation>
    <scope>NUCLEOTIDE SEQUENCE [LARGE SCALE GENOMIC DNA]</scope>
</reference>
<reference key="2">
    <citation type="journal article" date="2018" name="Virus Res.">
        <title>The L83L ORF of African swine fever virus strain Georgia encodes for a non-essential gene that interacts with the host protein IL-1beta.</title>
        <authorList>
            <person name="Borca M.V."/>
            <person name="O'Donnell V."/>
            <person name="Holinka L.G."/>
            <person name="Ramirez-Medina E."/>
            <person name="Clark B.A."/>
            <person name="Vuono E.A."/>
            <person name="Berggren K."/>
            <person name="Alfano M."/>
            <person name="Carey L.B."/>
            <person name="Richt J.A."/>
            <person name="Risatti G.R."/>
            <person name="Gladue D.P."/>
        </authorList>
    </citation>
    <scope>SUBCELLULAR LOCATION</scope>
    <scope>FUNCTION</scope>
    <scope>INTERACTION WITH HOST IL1B</scope>
    <scope>INDUCTION</scope>
    <source>
        <strain>Georgia</strain>
    </source>
</reference>
<reference key="3">
    <citation type="journal article" date="2020" name="J. Virol.">
        <title>The African Swine Fever Virus Transcriptome.</title>
        <authorList>
            <person name="Cackett G."/>
            <person name="Matelska D."/>
            <person name="Sykora M."/>
            <person name="Portugal R."/>
            <person name="Malecki M."/>
            <person name="Baehler J."/>
            <person name="Dixon L."/>
            <person name="Werner F."/>
        </authorList>
    </citation>
    <scope>INDUCTION</scope>
</reference>